<reference key="1">
    <citation type="submission" date="2007-02" db="EMBL/GenBank/DDBJ databases">
        <title>Complete sequence of chromosome of Yersinia pestis Pestoides F.</title>
        <authorList>
            <consortium name="US DOE Joint Genome Institute"/>
            <person name="Copeland A."/>
            <person name="Lucas S."/>
            <person name="Lapidus A."/>
            <person name="Barry K."/>
            <person name="Detter J.C."/>
            <person name="Glavina del Rio T."/>
            <person name="Hammon N."/>
            <person name="Israni S."/>
            <person name="Dalin E."/>
            <person name="Tice H."/>
            <person name="Pitluck S."/>
            <person name="Di Bartolo G."/>
            <person name="Chain P."/>
            <person name="Malfatti S."/>
            <person name="Shin M."/>
            <person name="Vergez L."/>
            <person name="Schmutz J."/>
            <person name="Larimer F."/>
            <person name="Land M."/>
            <person name="Hauser L."/>
            <person name="Worsham P."/>
            <person name="Chu M."/>
            <person name="Bearden S."/>
            <person name="Garcia E."/>
            <person name="Richardson P."/>
        </authorList>
    </citation>
    <scope>NUCLEOTIDE SEQUENCE [LARGE SCALE GENOMIC DNA]</scope>
    <source>
        <strain>Pestoides F</strain>
    </source>
</reference>
<organism>
    <name type="scientific">Yersinia pestis (strain Pestoides F)</name>
    <dbReference type="NCBI Taxonomy" id="386656"/>
    <lineage>
        <taxon>Bacteria</taxon>
        <taxon>Pseudomonadati</taxon>
        <taxon>Pseudomonadota</taxon>
        <taxon>Gammaproteobacteria</taxon>
        <taxon>Enterobacterales</taxon>
        <taxon>Yersiniaceae</taxon>
        <taxon>Yersinia</taxon>
    </lineage>
</organism>
<gene>
    <name evidence="1" type="primary">hisA</name>
    <name type="ordered locus">YPDSF_1432</name>
</gene>
<keyword id="KW-0028">Amino-acid biosynthesis</keyword>
<keyword id="KW-0963">Cytoplasm</keyword>
<keyword id="KW-0368">Histidine biosynthesis</keyword>
<keyword id="KW-0413">Isomerase</keyword>
<feature type="chain" id="PRO_1000063244" description="1-(5-phosphoribosyl)-5-[(5-phosphoribosylamino)methylideneamino] imidazole-4-carboxamide isomerase">
    <location>
        <begin position="1"/>
        <end position="245"/>
    </location>
</feature>
<feature type="active site" description="Proton acceptor" evidence="1">
    <location>
        <position position="7"/>
    </location>
</feature>
<feature type="active site" description="Proton donor" evidence="1">
    <location>
        <position position="129"/>
    </location>
</feature>
<accession>A4TKK7</accession>
<sequence>MIIPALDLIEGKVVRLHQGDYGQQRDYGNHPLPRLQDYQQQGAQVLHLVDLTGAKDPAARQIPLLRELLAGVDVPVQVGGGIRNEQDVVALLEAGAARVVVGSTAVKQPEMVQQWFERYGAEAIVLALDVRINEAGCKHVAISGWQENSDATLEQIVEQYLPYGLKHVLCTDISRDGTLSGSNVELYQEVCQRYPQVAFQASGGIGCLDDIARLRGSGVQGVIVGRALLDGKFNVKEAIACWQNV</sequence>
<name>HIS4_YERPP</name>
<comment type="catalytic activity">
    <reaction evidence="1">
        <text>1-(5-phospho-beta-D-ribosyl)-5-[(5-phospho-beta-D-ribosylamino)methylideneamino]imidazole-4-carboxamide = 5-[(5-phospho-1-deoxy-D-ribulos-1-ylimino)methylamino]-1-(5-phospho-beta-D-ribosyl)imidazole-4-carboxamide</text>
        <dbReference type="Rhea" id="RHEA:15469"/>
        <dbReference type="ChEBI" id="CHEBI:58435"/>
        <dbReference type="ChEBI" id="CHEBI:58525"/>
        <dbReference type="EC" id="5.3.1.16"/>
    </reaction>
</comment>
<comment type="pathway">
    <text evidence="1">Amino-acid biosynthesis; L-histidine biosynthesis; L-histidine from 5-phospho-alpha-D-ribose 1-diphosphate: step 4/9.</text>
</comment>
<comment type="subcellular location">
    <subcellularLocation>
        <location evidence="1">Cytoplasm</location>
    </subcellularLocation>
</comment>
<comment type="similarity">
    <text evidence="1">Belongs to the HisA/HisF family.</text>
</comment>
<proteinExistence type="inferred from homology"/>
<dbReference type="EC" id="5.3.1.16" evidence="1"/>
<dbReference type="EMBL" id="CP000668">
    <property type="protein sequence ID" value="ABP39819.1"/>
    <property type="molecule type" value="Genomic_DNA"/>
</dbReference>
<dbReference type="RefSeq" id="WP_002211891.1">
    <property type="nucleotide sequence ID" value="NZ_CP009715.1"/>
</dbReference>
<dbReference type="SMR" id="A4TKK7"/>
<dbReference type="GeneID" id="96665163"/>
<dbReference type="KEGG" id="ypp:YPDSF_1432"/>
<dbReference type="PATRIC" id="fig|386656.14.peg.2352"/>
<dbReference type="UniPathway" id="UPA00031">
    <property type="reaction ID" value="UER00009"/>
</dbReference>
<dbReference type="GO" id="GO:0005737">
    <property type="term" value="C:cytoplasm"/>
    <property type="evidence" value="ECO:0007669"/>
    <property type="project" value="UniProtKB-SubCell"/>
</dbReference>
<dbReference type="GO" id="GO:0003949">
    <property type="term" value="F:1-(5-phosphoribosyl)-5-[(5-phosphoribosylamino)methylideneamino]imidazole-4-carboxamide isomerase activity"/>
    <property type="evidence" value="ECO:0007669"/>
    <property type="project" value="UniProtKB-UniRule"/>
</dbReference>
<dbReference type="GO" id="GO:0000105">
    <property type="term" value="P:L-histidine biosynthetic process"/>
    <property type="evidence" value="ECO:0007669"/>
    <property type="project" value="UniProtKB-UniRule"/>
</dbReference>
<dbReference type="GO" id="GO:0000162">
    <property type="term" value="P:L-tryptophan biosynthetic process"/>
    <property type="evidence" value="ECO:0007669"/>
    <property type="project" value="TreeGrafter"/>
</dbReference>
<dbReference type="CDD" id="cd04732">
    <property type="entry name" value="HisA"/>
    <property type="match status" value="1"/>
</dbReference>
<dbReference type="FunFam" id="3.20.20.70:FF:000009">
    <property type="entry name" value="1-(5-phosphoribosyl)-5-[(5-phosphoribosylamino)methylideneamino] imidazole-4-carboxamide isomerase"/>
    <property type="match status" value="1"/>
</dbReference>
<dbReference type="Gene3D" id="3.20.20.70">
    <property type="entry name" value="Aldolase class I"/>
    <property type="match status" value="1"/>
</dbReference>
<dbReference type="HAMAP" id="MF_01014">
    <property type="entry name" value="HisA"/>
    <property type="match status" value="1"/>
</dbReference>
<dbReference type="InterPro" id="IPR013785">
    <property type="entry name" value="Aldolase_TIM"/>
</dbReference>
<dbReference type="InterPro" id="IPR006062">
    <property type="entry name" value="His_biosynth"/>
</dbReference>
<dbReference type="InterPro" id="IPR006063">
    <property type="entry name" value="HisA_bact_arch"/>
</dbReference>
<dbReference type="InterPro" id="IPR044524">
    <property type="entry name" value="Isoase_HisA-like"/>
</dbReference>
<dbReference type="InterPro" id="IPR023016">
    <property type="entry name" value="Isoase_HisA-like_bact"/>
</dbReference>
<dbReference type="InterPro" id="IPR011060">
    <property type="entry name" value="RibuloseP-bd_barrel"/>
</dbReference>
<dbReference type="NCBIfam" id="TIGR00007">
    <property type="entry name" value="1-(5-phosphoribosyl)-5-[(5-phosphoribosylamino)methylideneamino]imidazole-4-carboxamide isomerase"/>
    <property type="match status" value="1"/>
</dbReference>
<dbReference type="PANTHER" id="PTHR43090">
    <property type="entry name" value="1-(5-PHOSPHORIBOSYL)-5-[(5-PHOSPHORIBOSYLAMINO)METHYLIDENEAMINO] IMIDAZOLE-4-CARBOXAMIDE ISOMERASE"/>
    <property type="match status" value="1"/>
</dbReference>
<dbReference type="PANTHER" id="PTHR43090:SF2">
    <property type="entry name" value="1-(5-PHOSPHORIBOSYL)-5-[(5-PHOSPHORIBOSYLAMINO)METHYLIDENEAMINO] IMIDAZOLE-4-CARBOXAMIDE ISOMERASE"/>
    <property type="match status" value="1"/>
</dbReference>
<dbReference type="Pfam" id="PF00977">
    <property type="entry name" value="His_biosynth"/>
    <property type="match status" value="1"/>
</dbReference>
<dbReference type="SUPFAM" id="SSF51366">
    <property type="entry name" value="Ribulose-phoshate binding barrel"/>
    <property type="match status" value="1"/>
</dbReference>
<protein>
    <recommendedName>
        <fullName evidence="1">1-(5-phosphoribosyl)-5-[(5-phosphoribosylamino)methylideneamino] imidazole-4-carboxamide isomerase</fullName>
        <ecNumber evidence="1">5.3.1.16</ecNumber>
    </recommendedName>
    <alternativeName>
        <fullName evidence="1">Phosphoribosylformimino-5-aminoimidazole carboxamide ribotide isomerase</fullName>
    </alternativeName>
</protein>
<evidence type="ECO:0000255" key="1">
    <source>
        <dbReference type="HAMAP-Rule" id="MF_01014"/>
    </source>
</evidence>